<protein>
    <recommendedName>
        <fullName evidence="2">NADH-quinone oxidoreductase subunit B</fullName>
        <ecNumber evidence="2">7.1.1.-</ecNumber>
    </recommendedName>
    <alternativeName>
        <fullName evidence="2">NADH dehydrogenase I subunit B</fullName>
    </alternativeName>
    <alternativeName>
        <fullName evidence="2">NDH-1 subunit B</fullName>
    </alternativeName>
</protein>
<organism>
    <name type="scientific">Bordetella parapertussis (strain 12822 / ATCC BAA-587 / NCTC 13253)</name>
    <dbReference type="NCBI Taxonomy" id="257311"/>
    <lineage>
        <taxon>Bacteria</taxon>
        <taxon>Pseudomonadati</taxon>
        <taxon>Pseudomonadota</taxon>
        <taxon>Betaproteobacteria</taxon>
        <taxon>Burkholderiales</taxon>
        <taxon>Alcaligenaceae</taxon>
        <taxon>Bordetella</taxon>
    </lineage>
</organism>
<proteinExistence type="inferred from homology"/>
<accession>Q7W5A8</accession>
<name>NUOB_BORPA</name>
<evidence type="ECO:0000250" key="1"/>
<evidence type="ECO:0000255" key="2">
    <source>
        <dbReference type="HAMAP-Rule" id="MF_01356"/>
    </source>
</evidence>
<dbReference type="EC" id="7.1.1.-" evidence="2"/>
<dbReference type="EMBL" id="BX640433">
    <property type="protein sequence ID" value="CAE38675.1"/>
    <property type="molecule type" value="Genomic_DNA"/>
</dbReference>
<dbReference type="RefSeq" id="WP_003813941.1">
    <property type="nucleotide sequence ID" value="NC_002928.3"/>
</dbReference>
<dbReference type="SMR" id="Q7W5A8"/>
<dbReference type="KEGG" id="bpa:BPP3390"/>
<dbReference type="HOGENOM" id="CLU_055737_7_3_4"/>
<dbReference type="Proteomes" id="UP000001421">
    <property type="component" value="Chromosome"/>
</dbReference>
<dbReference type="GO" id="GO:0005886">
    <property type="term" value="C:plasma membrane"/>
    <property type="evidence" value="ECO:0007669"/>
    <property type="project" value="UniProtKB-SubCell"/>
</dbReference>
<dbReference type="GO" id="GO:0045271">
    <property type="term" value="C:respiratory chain complex I"/>
    <property type="evidence" value="ECO:0007669"/>
    <property type="project" value="TreeGrafter"/>
</dbReference>
<dbReference type="GO" id="GO:0051539">
    <property type="term" value="F:4 iron, 4 sulfur cluster binding"/>
    <property type="evidence" value="ECO:0007669"/>
    <property type="project" value="UniProtKB-KW"/>
</dbReference>
<dbReference type="GO" id="GO:0005506">
    <property type="term" value="F:iron ion binding"/>
    <property type="evidence" value="ECO:0007669"/>
    <property type="project" value="UniProtKB-UniRule"/>
</dbReference>
<dbReference type="GO" id="GO:0008137">
    <property type="term" value="F:NADH dehydrogenase (ubiquinone) activity"/>
    <property type="evidence" value="ECO:0007669"/>
    <property type="project" value="InterPro"/>
</dbReference>
<dbReference type="GO" id="GO:0050136">
    <property type="term" value="F:NADH:ubiquinone reductase (non-electrogenic) activity"/>
    <property type="evidence" value="ECO:0007669"/>
    <property type="project" value="UniProtKB-UniRule"/>
</dbReference>
<dbReference type="GO" id="GO:0048038">
    <property type="term" value="F:quinone binding"/>
    <property type="evidence" value="ECO:0007669"/>
    <property type="project" value="UniProtKB-KW"/>
</dbReference>
<dbReference type="GO" id="GO:0009060">
    <property type="term" value="P:aerobic respiration"/>
    <property type="evidence" value="ECO:0007669"/>
    <property type="project" value="TreeGrafter"/>
</dbReference>
<dbReference type="GO" id="GO:0015990">
    <property type="term" value="P:electron transport coupled proton transport"/>
    <property type="evidence" value="ECO:0007669"/>
    <property type="project" value="TreeGrafter"/>
</dbReference>
<dbReference type="FunFam" id="3.40.50.12280:FF:000001">
    <property type="entry name" value="NADH-quinone oxidoreductase subunit B 2"/>
    <property type="match status" value="1"/>
</dbReference>
<dbReference type="Gene3D" id="3.40.50.12280">
    <property type="match status" value="1"/>
</dbReference>
<dbReference type="HAMAP" id="MF_01356">
    <property type="entry name" value="NDH1_NuoB"/>
    <property type="match status" value="1"/>
</dbReference>
<dbReference type="InterPro" id="IPR006137">
    <property type="entry name" value="NADH_UbQ_OxRdtase-like_20kDa"/>
</dbReference>
<dbReference type="InterPro" id="IPR006138">
    <property type="entry name" value="NADH_UQ_OxRdtase_20Kd_su"/>
</dbReference>
<dbReference type="NCBIfam" id="TIGR01957">
    <property type="entry name" value="nuoB_fam"/>
    <property type="match status" value="1"/>
</dbReference>
<dbReference type="NCBIfam" id="NF005012">
    <property type="entry name" value="PRK06411.1"/>
    <property type="match status" value="1"/>
</dbReference>
<dbReference type="PANTHER" id="PTHR11995">
    <property type="entry name" value="NADH DEHYDROGENASE"/>
    <property type="match status" value="1"/>
</dbReference>
<dbReference type="PANTHER" id="PTHR11995:SF14">
    <property type="entry name" value="NADH DEHYDROGENASE [UBIQUINONE] IRON-SULFUR PROTEIN 7, MITOCHONDRIAL"/>
    <property type="match status" value="1"/>
</dbReference>
<dbReference type="Pfam" id="PF01058">
    <property type="entry name" value="Oxidored_q6"/>
    <property type="match status" value="1"/>
</dbReference>
<dbReference type="SUPFAM" id="SSF56770">
    <property type="entry name" value="HydA/Nqo6-like"/>
    <property type="match status" value="1"/>
</dbReference>
<dbReference type="PROSITE" id="PS01150">
    <property type="entry name" value="COMPLEX1_20K"/>
    <property type="match status" value="1"/>
</dbReference>
<feature type="chain" id="PRO_0000358352" description="NADH-quinone oxidoreductase subunit B">
    <location>
        <begin position="1"/>
        <end position="158"/>
    </location>
</feature>
<feature type="binding site" evidence="2">
    <location>
        <position position="37"/>
    </location>
    <ligand>
        <name>[4Fe-4S] cluster</name>
        <dbReference type="ChEBI" id="CHEBI:49883"/>
    </ligand>
</feature>
<feature type="binding site" evidence="2">
    <location>
        <position position="38"/>
    </location>
    <ligand>
        <name>[4Fe-4S] cluster</name>
        <dbReference type="ChEBI" id="CHEBI:49883"/>
    </ligand>
</feature>
<feature type="binding site" evidence="2">
    <location>
        <position position="102"/>
    </location>
    <ligand>
        <name>[4Fe-4S] cluster</name>
        <dbReference type="ChEBI" id="CHEBI:49883"/>
    </ligand>
</feature>
<feature type="binding site" evidence="2">
    <location>
        <position position="132"/>
    </location>
    <ligand>
        <name>[4Fe-4S] cluster</name>
        <dbReference type="ChEBI" id="CHEBI:49883"/>
    </ligand>
</feature>
<reference key="1">
    <citation type="journal article" date="2003" name="Nat. Genet.">
        <title>Comparative analysis of the genome sequences of Bordetella pertussis, Bordetella parapertussis and Bordetella bronchiseptica.</title>
        <authorList>
            <person name="Parkhill J."/>
            <person name="Sebaihia M."/>
            <person name="Preston A."/>
            <person name="Murphy L.D."/>
            <person name="Thomson N.R."/>
            <person name="Harris D.E."/>
            <person name="Holden M.T.G."/>
            <person name="Churcher C.M."/>
            <person name="Bentley S.D."/>
            <person name="Mungall K.L."/>
            <person name="Cerdeno-Tarraga A.-M."/>
            <person name="Temple L."/>
            <person name="James K.D."/>
            <person name="Harris B."/>
            <person name="Quail M.A."/>
            <person name="Achtman M."/>
            <person name="Atkin R."/>
            <person name="Baker S."/>
            <person name="Basham D."/>
            <person name="Bason N."/>
            <person name="Cherevach I."/>
            <person name="Chillingworth T."/>
            <person name="Collins M."/>
            <person name="Cronin A."/>
            <person name="Davis P."/>
            <person name="Doggett J."/>
            <person name="Feltwell T."/>
            <person name="Goble A."/>
            <person name="Hamlin N."/>
            <person name="Hauser H."/>
            <person name="Holroyd S."/>
            <person name="Jagels K."/>
            <person name="Leather S."/>
            <person name="Moule S."/>
            <person name="Norberczak H."/>
            <person name="O'Neil S."/>
            <person name="Ormond D."/>
            <person name="Price C."/>
            <person name="Rabbinowitsch E."/>
            <person name="Rutter S."/>
            <person name="Sanders M."/>
            <person name="Saunders D."/>
            <person name="Seeger K."/>
            <person name="Sharp S."/>
            <person name="Simmonds M."/>
            <person name="Skelton J."/>
            <person name="Squares R."/>
            <person name="Squares S."/>
            <person name="Stevens K."/>
            <person name="Unwin L."/>
            <person name="Whitehead S."/>
            <person name="Barrell B.G."/>
            <person name="Maskell D.J."/>
        </authorList>
    </citation>
    <scope>NUCLEOTIDE SEQUENCE [LARGE SCALE GENOMIC DNA]</scope>
    <source>
        <strain>12822 / ATCC BAA-587 / NCTC 13253</strain>
    </source>
</reference>
<gene>
    <name evidence="2" type="primary">nuoB</name>
    <name type="ordered locus">BPP3390</name>
</gene>
<comment type="function">
    <text evidence="1">NDH-1 shuttles electrons from NADH, via FMN and iron-sulfur (Fe-S) centers, to quinones in the respiratory chain. Couples the redox reaction to proton translocation (for every two electrons transferred, four hydrogen ions are translocated across the cytoplasmic membrane), and thus conserves the redox energy in a proton gradient (By similarity).</text>
</comment>
<comment type="catalytic activity">
    <reaction evidence="2">
        <text>a quinone + NADH + 5 H(+)(in) = a quinol + NAD(+) + 4 H(+)(out)</text>
        <dbReference type="Rhea" id="RHEA:57888"/>
        <dbReference type="ChEBI" id="CHEBI:15378"/>
        <dbReference type="ChEBI" id="CHEBI:24646"/>
        <dbReference type="ChEBI" id="CHEBI:57540"/>
        <dbReference type="ChEBI" id="CHEBI:57945"/>
        <dbReference type="ChEBI" id="CHEBI:132124"/>
    </reaction>
</comment>
<comment type="cofactor">
    <cofactor evidence="2">
        <name>[4Fe-4S] cluster</name>
        <dbReference type="ChEBI" id="CHEBI:49883"/>
    </cofactor>
    <text evidence="2">Binds 1 [4Fe-4S] cluster.</text>
</comment>
<comment type="subunit">
    <text evidence="2">NDH-1 is composed of 14 different subunits. Subunits NuoB, C, D, E, F, and G constitute the peripheral sector of the complex.</text>
</comment>
<comment type="subcellular location">
    <subcellularLocation>
        <location evidence="2">Cell inner membrane</location>
        <topology evidence="2">Peripheral membrane protein</topology>
        <orientation evidence="2">Cytoplasmic side</orientation>
    </subcellularLocation>
</comment>
<comment type="similarity">
    <text evidence="2">Belongs to the complex I 20 kDa subunit family.</text>
</comment>
<sequence length="158" mass="17425">MAIDGILKQGFITTSADKFLNWAKTGSMWPMTFGLACCAVEMMHAGAARYDLDQFGIIFRPSPRQSDLMIVAGTLCNKMGPALRKVYDQMPEPRWVVSMGSCANGGGYYHYSYSVVRGCDRIVPVDVYVPGCPPTAEALVYGLLQMQNKIRLTNTIAR</sequence>
<keyword id="KW-0004">4Fe-4S</keyword>
<keyword id="KW-0997">Cell inner membrane</keyword>
<keyword id="KW-1003">Cell membrane</keyword>
<keyword id="KW-0408">Iron</keyword>
<keyword id="KW-0411">Iron-sulfur</keyword>
<keyword id="KW-0472">Membrane</keyword>
<keyword id="KW-0479">Metal-binding</keyword>
<keyword id="KW-0520">NAD</keyword>
<keyword id="KW-0874">Quinone</keyword>
<keyword id="KW-1278">Translocase</keyword>
<keyword id="KW-0813">Transport</keyword>
<keyword id="KW-0830">Ubiquinone</keyword>